<dbReference type="EC" id="6.1.1.7" evidence="1"/>
<dbReference type="EMBL" id="AM743169">
    <property type="protein sequence ID" value="CAQ45266.1"/>
    <property type="molecule type" value="Genomic_DNA"/>
</dbReference>
<dbReference type="RefSeq" id="WP_005412938.1">
    <property type="nucleotide sequence ID" value="NC_010943.1"/>
</dbReference>
<dbReference type="SMR" id="B2FL33"/>
<dbReference type="EnsemblBacteria" id="CAQ45266">
    <property type="protein sequence ID" value="CAQ45266"/>
    <property type="gene ID" value="Smlt1743"/>
</dbReference>
<dbReference type="KEGG" id="sml:Smlt1743"/>
<dbReference type="PATRIC" id="fig|522373.3.peg.1666"/>
<dbReference type="eggNOG" id="COG0013">
    <property type="taxonomic scope" value="Bacteria"/>
</dbReference>
<dbReference type="HOGENOM" id="CLU_004485_1_1_6"/>
<dbReference type="Proteomes" id="UP000008840">
    <property type="component" value="Chromosome"/>
</dbReference>
<dbReference type="GO" id="GO:0005829">
    <property type="term" value="C:cytosol"/>
    <property type="evidence" value="ECO:0007669"/>
    <property type="project" value="TreeGrafter"/>
</dbReference>
<dbReference type="GO" id="GO:0004813">
    <property type="term" value="F:alanine-tRNA ligase activity"/>
    <property type="evidence" value="ECO:0007669"/>
    <property type="project" value="UniProtKB-UniRule"/>
</dbReference>
<dbReference type="GO" id="GO:0002161">
    <property type="term" value="F:aminoacyl-tRNA deacylase activity"/>
    <property type="evidence" value="ECO:0007669"/>
    <property type="project" value="TreeGrafter"/>
</dbReference>
<dbReference type="GO" id="GO:0005524">
    <property type="term" value="F:ATP binding"/>
    <property type="evidence" value="ECO:0007669"/>
    <property type="project" value="UniProtKB-UniRule"/>
</dbReference>
<dbReference type="GO" id="GO:0000049">
    <property type="term" value="F:tRNA binding"/>
    <property type="evidence" value="ECO:0007669"/>
    <property type="project" value="UniProtKB-KW"/>
</dbReference>
<dbReference type="GO" id="GO:0008270">
    <property type="term" value="F:zinc ion binding"/>
    <property type="evidence" value="ECO:0007669"/>
    <property type="project" value="UniProtKB-UniRule"/>
</dbReference>
<dbReference type="GO" id="GO:0006419">
    <property type="term" value="P:alanyl-tRNA aminoacylation"/>
    <property type="evidence" value="ECO:0007669"/>
    <property type="project" value="UniProtKB-UniRule"/>
</dbReference>
<dbReference type="GO" id="GO:0045892">
    <property type="term" value="P:negative regulation of DNA-templated transcription"/>
    <property type="evidence" value="ECO:0007669"/>
    <property type="project" value="TreeGrafter"/>
</dbReference>
<dbReference type="CDD" id="cd00673">
    <property type="entry name" value="AlaRS_core"/>
    <property type="match status" value="1"/>
</dbReference>
<dbReference type="FunFam" id="2.40.30.130:FF:000001">
    <property type="entry name" value="Alanine--tRNA ligase"/>
    <property type="match status" value="1"/>
</dbReference>
<dbReference type="FunFam" id="3.10.310.40:FF:000001">
    <property type="entry name" value="Alanine--tRNA ligase"/>
    <property type="match status" value="1"/>
</dbReference>
<dbReference type="FunFam" id="3.30.54.20:FF:000001">
    <property type="entry name" value="Alanine--tRNA ligase"/>
    <property type="match status" value="1"/>
</dbReference>
<dbReference type="FunFam" id="3.30.930.10:FF:000004">
    <property type="entry name" value="Alanine--tRNA ligase"/>
    <property type="match status" value="1"/>
</dbReference>
<dbReference type="FunFam" id="3.30.980.10:FF:000004">
    <property type="entry name" value="Alanine--tRNA ligase, cytoplasmic"/>
    <property type="match status" value="1"/>
</dbReference>
<dbReference type="Gene3D" id="2.40.30.130">
    <property type="match status" value="1"/>
</dbReference>
<dbReference type="Gene3D" id="3.10.310.40">
    <property type="match status" value="1"/>
</dbReference>
<dbReference type="Gene3D" id="3.30.54.20">
    <property type="match status" value="1"/>
</dbReference>
<dbReference type="Gene3D" id="6.10.250.550">
    <property type="match status" value="1"/>
</dbReference>
<dbReference type="Gene3D" id="3.30.930.10">
    <property type="entry name" value="Bira Bifunctional Protein, Domain 2"/>
    <property type="match status" value="1"/>
</dbReference>
<dbReference type="Gene3D" id="3.30.980.10">
    <property type="entry name" value="Threonyl-trna Synthetase, Chain A, domain 2"/>
    <property type="match status" value="1"/>
</dbReference>
<dbReference type="HAMAP" id="MF_00036_B">
    <property type="entry name" value="Ala_tRNA_synth_B"/>
    <property type="match status" value="1"/>
</dbReference>
<dbReference type="InterPro" id="IPR045864">
    <property type="entry name" value="aa-tRNA-synth_II/BPL/LPL"/>
</dbReference>
<dbReference type="InterPro" id="IPR002318">
    <property type="entry name" value="Ala-tRNA-lgiase_IIc"/>
</dbReference>
<dbReference type="InterPro" id="IPR018162">
    <property type="entry name" value="Ala-tRNA-ligase_IIc_anticod-bd"/>
</dbReference>
<dbReference type="InterPro" id="IPR018165">
    <property type="entry name" value="Ala-tRNA-synth_IIc_core"/>
</dbReference>
<dbReference type="InterPro" id="IPR018164">
    <property type="entry name" value="Ala-tRNA-synth_IIc_N"/>
</dbReference>
<dbReference type="InterPro" id="IPR050058">
    <property type="entry name" value="Ala-tRNA_ligase"/>
</dbReference>
<dbReference type="InterPro" id="IPR023033">
    <property type="entry name" value="Ala_tRNA_ligase_euk/bac"/>
</dbReference>
<dbReference type="InterPro" id="IPR003156">
    <property type="entry name" value="DHHA1_dom"/>
</dbReference>
<dbReference type="InterPro" id="IPR018163">
    <property type="entry name" value="Thr/Ala-tRNA-synth_IIc_edit"/>
</dbReference>
<dbReference type="InterPro" id="IPR009000">
    <property type="entry name" value="Transl_B-barrel_sf"/>
</dbReference>
<dbReference type="InterPro" id="IPR012947">
    <property type="entry name" value="tRNA_SAD"/>
</dbReference>
<dbReference type="NCBIfam" id="TIGR00344">
    <property type="entry name" value="alaS"/>
    <property type="match status" value="1"/>
</dbReference>
<dbReference type="PANTHER" id="PTHR11777:SF9">
    <property type="entry name" value="ALANINE--TRNA LIGASE, CYTOPLASMIC"/>
    <property type="match status" value="1"/>
</dbReference>
<dbReference type="PANTHER" id="PTHR11777">
    <property type="entry name" value="ALANYL-TRNA SYNTHETASE"/>
    <property type="match status" value="1"/>
</dbReference>
<dbReference type="Pfam" id="PF02272">
    <property type="entry name" value="DHHA1"/>
    <property type="match status" value="1"/>
</dbReference>
<dbReference type="Pfam" id="PF01411">
    <property type="entry name" value="tRNA-synt_2c"/>
    <property type="match status" value="1"/>
</dbReference>
<dbReference type="Pfam" id="PF07973">
    <property type="entry name" value="tRNA_SAD"/>
    <property type="match status" value="1"/>
</dbReference>
<dbReference type="PRINTS" id="PR00980">
    <property type="entry name" value="TRNASYNTHALA"/>
</dbReference>
<dbReference type="SMART" id="SM00863">
    <property type="entry name" value="tRNA_SAD"/>
    <property type="match status" value="1"/>
</dbReference>
<dbReference type="SUPFAM" id="SSF55681">
    <property type="entry name" value="Class II aaRS and biotin synthetases"/>
    <property type="match status" value="1"/>
</dbReference>
<dbReference type="SUPFAM" id="SSF101353">
    <property type="entry name" value="Putative anticodon-binding domain of alanyl-tRNA synthetase (AlaRS)"/>
    <property type="match status" value="1"/>
</dbReference>
<dbReference type="SUPFAM" id="SSF55186">
    <property type="entry name" value="ThrRS/AlaRS common domain"/>
    <property type="match status" value="1"/>
</dbReference>
<dbReference type="SUPFAM" id="SSF50447">
    <property type="entry name" value="Translation proteins"/>
    <property type="match status" value="1"/>
</dbReference>
<dbReference type="PROSITE" id="PS50860">
    <property type="entry name" value="AA_TRNA_LIGASE_II_ALA"/>
    <property type="match status" value="1"/>
</dbReference>
<feature type="chain" id="PRO_0000347816" description="Alanine--tRNA ligase">
    <location>
        <begin position="1"/>
        <end position="882"/>
    </location>
</feature>
<feature type="binding site" evidence="1">
    <location>
        <position position="571"/>
    </location>
    <ligand>
        <name>Zn(2+)</name>
        <dbReference type="ChEBI" id="CHEBI:29105"/>
    </ligand>
</feature>
<feature type="binding site" evidence="1">
    <location>
        <position position="575"/>
    </location>
    <ligand>
        <name>Zn(2+)</name>
        <dbReference type="ChEBI" id="CHEBI:29105"/>
    </ligand>
</feature>
<feature type="binding site" evidence="1">
    <location>
        <position position="673"/>
    </location>
    <ligand>
        <name>Zn(2+)</name>
        <dbReference type="ChEBI" id="CHEBI:29105"/>
    </ligand>
</feature>
<feature type="binding site" evidence="1">
    <location>
        <position position="677"/>
    </location>
    <ligand>
        <name>Zn(2+)</name>
        <dbReference type="ChEBI" id="CHEBI:29105"/>
    </ligand>
</feature>
<evidence type="ECO:0000255" key="1">
    <source>
        <dbReference type="HAMAP-Rule" id="MF_00036"/>
    </source>
</evidence>
<comment type="function">
    <text evidence="1">Catalyzes the attachment of alanine to tRNA(Ala) in a two-step reaction: alanine is first activated by ATP to form Ala-AMP and then transferred to the acceptor end of tRNA(Ala). Also edits incorrectly charged Ser-tRNA(Ala) and Gly-tRNA(Ala) via its editing domain.</text>
</comment>
<comment type="catalytic activity">
    <reaction evidence="1">
        <text>tRNA(Ala) + L-alanine + ATP = L-alanyl-tRNA(Ala) + AMP + diphosphate</text>
        <dbReference type="Rhea" id="RHEA:12540"/>
        <dbReference type="Rhea" id="RHEA-COMP:9657"/>
        <dbReference type="Rhea" id="RHEA-COMP:9923"/>
        <dbReference type="ChEBI" id="CHEBI:30616"/>
        <dbReference type="ChEBI" id="CHEBI:33019"/>
        <dbReference type="ChEBI" id="CHEBI:57972"/>
        <dbReference type="ChEBI" id="CHEBI:78442"/>
        <dbReference type="ChEBI" id="CHEBI:78497"/>
        <dbReference type="ChEBI" id="CHEBI:456215"/>
        <dbReference type="EC" id="6.1.1.7"/>
    </reaction>
</comment>
<comment type="cofactor">
    <cofactor evidence="1">
        <name>Zn(2+)</name>
        <dbReference type="ChEBI" id="CHEBI:29105"/>
    </cofactor>
    <text evidence="1">Binds 1 zinc ion per subunit.</text>
</comment>
<comment type="subcellular location">
    <subcellularLocation>
        <location evidence="1">Cytoplasm</location>
    </subcellularLocation>
</comment>
<comment type="domain">
    <text evidence="1">Consists of three domains; the N-terminal catalytic domain, the editing domain and the C-terminal C-Ala domain. The editing domain removes incorrectly charged amino acids, while the C-Ala domain, along with tRNA(Ala), serves as a bridge to cooperatively bring together the editing and aminoacylation centers thus stimulating deacylation of misacylated tRNAs.</text>
</comment>
<comment type="similarity">
    <text evidence="1">Belongs to the class-II aminoacyl-tRNA synthetase family.</text>
</comment>
<keyword id="KW-0030">Aminoacyl-tRNA synthetase</keyword>
<keyword id="KW-0067">ATP-binding</keyword>
<keyword id="KW-0963">Cytoplasm</keyword>
<keyword id="KW-0436">Ligase</keyword>
<keyword id="KW-0479">Metal-binding</keyword>
<keyword id="KW-0547">Nucleotide-binding</keyword>
<keyword id="KW-0648">Protein biosynthesis</keyword>
<keyword id="KW-1185">Reference proteome</keyword>
<keyword id="KW-0694">RNA-binding</keyword>
<keyword id="KW-0820">tRNA-binding</keyword>
<keyword id="KW-0862">Zinc</keyword>
<protein>
    <recommendedName>
        <fullName evidence="1">Alanine--tRNA ligase</fullName>
        <ecNumber evidence="1">6.1.1.7</ecNumber>
    </recommendedName>
    <alternativeName>
        <fullName evidence="1">Alanyl-tRNA synthetase</fullName>
        <shortName evidence="1">AlaRS</shortName>
    </alternativeName>
</protein>
<proteinExistence type="inferred from homology"/>
<gene>
    <name evidence="1" type="primary">alaS</name>
    <name type="ordered locus">Smlt1743</name>
</gene>
<reference key="1">
    <citation type="journal article" date="2008" name="Genome Biol.">
        <title>The complete genome, comparative and functional analysis of Stenotrophomonas maltophilia reveals an organism heavily shielded by drug resistance determinants.</title>
        <authorList>
            <person name="Crossman L.C."/>
            <person name="Gould V.C."/>
            <person name="Dow J.M."/>
            <person name="Vernikos G.S."/>
            <person name="Okazaki A."/>
            <person name="Sebaihia M."/>
            <person name="Saunders D."/>
            <person name="Arrowsmith C."/>
            <person name="Carver T."/>
            <person name="Peters N."/>
            <person name="Adlem E."/>
            <person name="Kerhornou A."/>
            <person name="Lord A."/>
            <person name="Murphy L."/>
            <person name="Seeger K."/>
            <person name="Squares R."/>
            <person name="Rutter S."/>
            <person name="Quail M.A."/>
            <person name="Rajandream M.A."/>
            <person name="Harris D."/>
            <person name="Churcher C."/>
            <person name="Bentley S.D."/>
            <person name="Parkhill J."/>
            <person name="Thomson N.R."/>
            <person name="Avison M.B."/>
        </authorList>
    </citation>
    <scope>NUCLEOTIDE SEQUENCE [LARGE SCALE GENOMIC DNA]</scope>
    <source>
        <strain>K279a</strain>
    </source>
</reference>
<accession>B2FL33</accession>
<name>SYA_STRMK</name>
<sequence>MNASAKFTTSQIRSDFLEFFKGKGHTIVPSAPLVPGNDPTLLFTNSGMVQFKDVFLGAEKRSYVRAADVQRCLRAGGKHNDLDQVGYTARHHTFFEMLGNWSFGDYFKKDAIAWAWELLTQVWKLPAERLLVTVYQTDDEAYALWRDMVGVPEERIVRIGDNKGAPFASDNFWQMADTGPCGPCTEIFYDHGDHIAGGPPGSPDEDGDRFIEIWNLVFMQFDRQPDGTLVPLPAPCVDTGMGLERLAAILQHVHTNYEIDLFQALIRKASELTGTADLENKSLRVIADHIRACSFLIVDGVLPSNEGRGYVLRRIIRRALRHGWMLGVRQPFFSKLVPTLVEQMGEAYPELPAAVDTVTRALQAEEERFAETLDAGMKIFEDVAGKASNGVIPGVDAFRLYDTYGFPLDLTQDIARERDLTVDIAGFDAAMEQQRETARAAGKFGGGVTLPAELVATLSPTLFLGYDRLQADGLTVLALLKDGRPVQSADAGDAVIVITNQTPFYAESGGQVGDTGVLTGNGVRLAVDDTQKFAGQFHGHVGTLSEGGLKVGDVLSGQVDGERRGATILNHSATHLLHAALREVLGSHVQQKGSLVAPDRLRFDFSHFQPISAEELAVIERKVNQQVRANNAAEVHNMGMQEALDFGAMALFGEKYGEHVRVLKMGDYSTELCGGTHVNRTGDIGLFKITSEGGVSAGVRRIEAVTGQGALDYVDAEEARLAEAAELLGGSAADVVEKIRALGQRQKQLERELEAVKAKVAAGATADLSGQAVEVAGVKVLAARLEGFDAKALRDAMDRLKQQLGDAVIVLAGAQDGKAALVAGVNGSAMGKVKAGELLSHIASQIGGKGGGRPDLAQGGGEDGPALATALAAVVEWVSPRL</sequence>
<organism>
    <name type="scientific">Stenotrophomonas maltophilia (strain K279a)</name>
    <dbReference type="NCBI Taxonomy" id="522373"/>
    <lineage>
        <taxon>Bacteria</taxon>
        <taxon>Pseudomonadati</taxon>
        <taxon>Pseudomonadota</taxon>
        <taxon>Gammaproteobacteria</taxon>
        <taxon>Lysobacterales</taxon>
        <taxon>Lysobacteraceae</taxon>
        <taxon>Stenotrophomonas</taxon>
        <taxon>Stenotrophomonas maltophilia group</taxon>
    </lineage>
</organism>